<evidence type="ECO:0000255" key="1">
    <source>
        <dbReference type="HAMAP-Rule" id="MF_00470"/>
    </source>
</evidence>
<accession>B7NNU1</accession>
<sequence length="320" mass="35479">MRSAQVYRWQIPMDAGVVLRDRRLKTRDGLYVCLREGEREGWGEISPLPGFSQETWEEAQSVLLAWVNNWLAGDCELPQMPSVAFGVSCALAELTDALPQAANYRAAPLCNGDPDDLILKLADMPGEKVAKVKVGLYEAVRDGMVVNLLLEAIPDLHLRLDANRAWTPLKGQQFAKYVNPDYRHRIAFLEEPCKTRDDSRAFARETGIAIAWDESLREPDFAFVAEEGVRAVVIKPTLTGSLDKVREQVKAAHALGLTAVISSSIESSLGLTQLARIAAWLTPDTIPGLDTLDLMQVQQVRRWPGSPLPLVDVDALERLL</sequence>
<dbReference type="EC" id="4.2.1.113" evidence="1"/>
<dbReference type="EMBL" id="CU928164">
    <property type="protein sequence ID" value="CAR18535.1"/>
    <property type="molecule type" value="Genomic_DNA"/>
</dbReference>
<dbReference type="RefSeq" id="WP_001255625.1">
    <property type="nucleotide sequence ID" value="NC_011750.1"/>
</dbReference>
<dbReference type="RefSeq" id="YP_002408365.1">
    <property type="nucleotide sequence ID" value="NC_011750.1"/>
</dbReference>
<dbReference type="SMR" id="B7NNU1"/>
<dbReference type="STRING" id="585057.ECIAI39_2409"/>
<dbReference type="KEGG" id="ect:ECIAI39_2409"/>
<dbReference type="PATRIC" id="fig|585057.6.peg.2511"/>
<dbReference type="HOGENOM" id="CLU_030273_0_1_6"/>
<dbReference type="UniPathway" id="UPA00079"/>
<dbReference type="UniPathway" id="UPA01057">
    <property type="reaction ID" value="UER00165"/>
</dbReference>
<dbReference type="Proteomes" id="UP000000749">
    <property type="component" value="Chromosome"/>
</dbReference>
<dbReference type="GO" id="GO:0000287">
    <property type="term" value="F:magnesium ion binding"/>
    <property type="evidence" value="ECO:0007669"/>
    <property type="project" value="UniProtKB-UniRule"/>
</dbReference>
<dbReference type="GO" id="GO:0043748">
    <property type="term" value="F:O-succinylbenzoate synthase activity"/>
    <property type="evidence" value="ECO:0007669"/>
    <property type="project" value="UniProtKB-EC"/>
</dbReference>
<dbReference type="GO" id="GO:0009234">
    <property type="term" value="P:menaquinone biosynthetic process"/>
    <property type="evidence" value="ECO:0007669"/>
    <property type="project" value="UniProtKB-UniRule"/>
</dbReference>
<dbReference type="CDD" id="cd03320">
    <property type="entry name" value="OSBS"/>
    <property type="match status" value="1"/>
</dbReference>
<dbReference type="FunFam" id="3.20.20.120:FF:000006">
    <property type="entry name" value="o-succinylbenzoate synthase"/>
    <property type="match status" value="1"/>
</dbReference>
<dbReference type="FunFam" id="3.30.390.10:FF:000005">
    <property type="entry name" value="o-succinylbenzoate synthase"/>
    <property type="match status" value="1"/>
</dbReference>
<dbReference type="Gene3D" id="3.20.20.120">
    <property type="entry name" value="Enolase-like C-terminal domain"/>
    <property type="match status" value="1"/>
</dbReference>
<dbReference type="Gene3D" id="3.30.390.10">
    <property type="entry name" value="Enolase-like, N-terminal domain"/>
    <property type="match status" value="1"/>
</dbReference>
<dbReference type="HAMAP" id="MF_00470">
    <property type="entry name" value="MenC_1"/>
    <property type="match status" value="1"/>
</dbReference>
<dbReference type="InterPro" id="IPR036849">
    <property type="entry name" value="Enolase-like_C_sf"/>
</dbReference>
<dbReference type="InterPro" id="IPR029017">
    <property type="entry name" value="Enolase-like_N"/>
</dbReference>
<dbReference type="InterPro" id="IPR029065">
    <property type="entry name" value="Enolase_C-like"/>
</dbReference>
<dbReference type="InterPro" id="IPR013342">
    <property type="entry name" value="Mandelate_racemase_C"/>
</dbReference>
<dbReference type="InterPro" id="IPR010196">
    <property type="entry name" value="OSB_synthase_MenC1"/>
</dbReference>
<dbReference type="InterPro" id="IPR041338">
    <property type="entry name" value="OSBS_N"/>
</dbReference>
<dbReference type="NCBIfam" id="TIGR01927">
    <property type="entry name" value="menC_gam_Gplu"/>
    <property type="match status" value="1"/>
</dbReference>
<dbReference type="NCBIfam" id="NF003473">
    <property type="entry name" value="PRK05105.1"/>
    <property type="match status" value="1"/>
</dbReference>
<dbReference type="PANTHER" id="PTHR48073:SF2">
    <property type="entry name" value="O-SUCCINYLBENZOATE SYNTHASE"/>
    <property type="match status" value="1"/>
</dbReference>
<dbReference type="PANTHER" id="PTHR48073">
    <property type="entry name" value="O-SUCCINYLBENZOATE SYNTHASE-RELATED"/>
    <property type="match status" value="1"/>
</dbReference>
<dbReference type="Pfam" id="PF21508">
    <property type="entry name" value="MenC_N"/>
    <property type="match status" value="1"/>
</dbReference>
<dbReference type="Pfam" id="PF13378">
    <property type="entry name" value="MR_MLE_C"/>
    <property type="match status" value="1"/>
</dbReference>
<dbReference type="SFLD" id="SFLDS00001">
    <property type="entry name" value="Enolase"/>
    <property type="match status" value="1"/>
</dbReference>
<dbReference type="SFLD" id="SFLDF00009">
    <property type="entry name" value="o-succinylbenzoate_synthase"/>
    <property type="match status" value="1"/>
</dbReference>
<dbReference type="SMART" id="SM00922">
    <property type="entry name" value="MR_MLE"/>
    <property type="match status" value="1"/>
</dbReference>
<dbReference type="SUPFAM" id="SSF51604">
    <property type="entry name" value="Enolase C-terminal domain-like"/>
    <property type="match status" value="1"/>
</dbReference>
<dbReference type="SUPFAM" id="SSF54826">
    <property type="entry name" value="Enolase N-terminal domain-like"/>
    <property type="match status" value="1"/>
</dbReference>
<gene>
    <name evidence="1" type="primary">menC</name>
    <name type="ordered locus">ECIAI39_2409</name>
</gene>
<keyword id="KW-0456">Lyase</keyword>
<keyword id="KW-0460">Magnesium</keyword>
<keyword id="KW-0474">Menaquinone biosynthesis</keyword>
<keyword id="KW-0479">Metal-binding</keyword>
<reference key="1">
    <citation type="journal article" date="2009" name="PLoS Genet.">
        <title>Organised genome dynamics in the Escherichia coli species results in highly diverse adaptive paths.</title>
        <authorList>
            <person name="Touchon M."/>
            <person name="Hoede C."/>
            <person name="Tenaillon O."/>
            <person name="Barbe V."/>
            <person name="Baeriswyl S."/>
            <person name="Bidet P."/>
            <person name="Bingen E."/>
            <person name="Bonacorsi S."/>
            <person name="Bouchier C."/>
            <person name="Bouvet O."/>
            <person name="Calteau A."/>
            <person name="Chiapello H."/>
            <person name="Clermont O."/>
            <person name="Cruveiller S."/>
            <person name="Danchin A."/>
            <person name="Diard M."/>
            <person name="Dossat C."/>
            <person name="Karoui M.E."/>
            <person name="Frapy E."/>
            <person name="Garry L."/>
            <person name="Ghigo J.M."/>
            <person name="Gilles A.M."/>
            <person name="Johnson J."/>
            <person name="Le Bouguenec C."/>
            <person name="Lescat M."/>
            <person name="Mangenot S."/>
            <person name="Martinez-Jehanne V."/>
            <person name="Matic I."/>
            <person name="Nassif X."/>
            <person name="Oztas S."/>
            <person name="Petit M.A."/>
            <person name="Pichon C."/>
            <person name="Rouy Z."/>
            <person name="Ruf C.S."/>
            <person name="Schneider D."/>
            <person name="Tourret J."/>
            <person name="Vacherie B."/>
            <person name="Vallenet D."/>
            <person name="Medigue C."/>
            <person name="Rocha E.P.C."/>
            <person name="Denamur E."/>
        </authorList>
    </citation>
    <scope>NUCLEOTIDE SEQUENCE [LARGE SCALE GENOMIC DNA]</scope>
    <source>
        <strain>IAI39 / ExPEC</strain>
    </source>
</reference>
<protein>
    <recommendedName>
        <fullName evidence="1">o-succinylbenzoate synthase</fullName>
        <shortName evidence="1">OSB synthase</shortName>
        <shortName evidence="1">OSBS</shortName>
        <ecNumber evidence="1">4.2.1.113</ecNumber>
    </recommendedName>
    <alternativeName>
        <fullName evidence="1">4-(2'-carboxyphenyl)-4-oxybutyric acid synthase</fullName>
    </alternativeName>
    <alternativeName>
        <fullName evidence="1">o-succinylbenzoic acid synthase</fullName>
    </alternativeName>
</protein>
<comment type="function">
    <text evidence="1">Converts 2-succinyl-6-hydroxy-2,4-cyclohexadiene-1-carboxylate (SHCHC) to 2-succinylbenzoate (OSB).</text>
</comment>
<comment type="catalytic activity">
    <reaction evidence="1">
        <text>(1R,6R)-6-hydroxy-2-succinyl-cyclohexa-2,4-diene-1-carboxylate = 2-succinylbenzoate + H2O</text>
        <dbReference type="Rhea" id="RHEA:10196"/>
        <dbReference type="ChEBI" id="CHEBI:15377"/>
        <dbReference type="ChEBI" id="CHEBI:18325"/>
        <dbReference type="ChEBI" id="CHEBI:58689"/>
        <dbReference type="EC" id="4.2.1.113"/>
    </reaction>
</comment>
<comment type="cofactor">
    <cofactor evidence="1">
        <name>a divalent metal cation</name>
        <dbReference type="ChEBI" id="CHEBI:60240"/>
    </cofactor>
</comment>
<comment type="pathway">
    <text evidence="1">Quinol/quinone metabolism; 1,4-dihydroxy-2-naphthoate biosynthesis; 1,4-dihydroxy-2-naphthoate from chorismate: step 4/7.</text>
</comment>
<comment type="pathway">
    <text evidence="1">Quinol/quinone metabolism; menaquinone biosynthesis.</text>
</comment>
<comment type="similarity">
    <text evidence="1">Belongs to the mandelate racemase/muconate lactonizing enzyme family. MenC type 1 subfamily.</text>
</comment>
<proteinExistence type="inferred from homology"/>
<feature type="chain" id="PRO_1000125568" description="o-succinylbenzoate synthase">
    <location>
        <begin position="1"/>
        <end position="320"/>
    </location>
</feature>
<feature type="active site" description="Proton donor" evidence="1">
    <location>
        <position position="133"/>
    </location>
</feature>
<feature type="active site" description="Proton acceptor" evidence="1">
    <location>
        <position position="235"/>
    </location>
</feature>
<feature type="binding site" evidence="1">
    <location>
        <position position="161"/>
    </location>
    <ligand>
        <name>Mg(2+)</name>
        <dbReference type="ChEBI" id="CHEBI:18420"/>
    </ligand>
</feature>
<feature type="binding site" evidence="1">
    <location>
        <position position="190"/>
    </location>
    <ligand>
        <name>Mg(2+)</name>
        <dbReference type="ChEBI" id="CHEBI:18420"/>
    </ligand>
</feature>
<feature type="binding site" evidence="1">
    <location>
        <position position="213"/>
    </location>
    <ligand>
        <name>Mg(2+)</name>
        <dbReference type="ChEBI" id="CHEBI:18420"/>
    </ligand>
</feature>
<organism>
    <name type="scientific">Escherichia coli O7:K1 (strain IAI39 / ExPEC)</name>
    <dbReference type="NCBI Taxonomy" id="585057"/>
    <lineage>
        <taxon>Bacteria</taxon>
        <taxon>Pseudomonadati</taxon>
        <taxon>Pseudomonadota</taxon>
        <taxon>Gammaproteobacteria</taxon>
        <taxon>Enterobacterales</taxon>
        <taxon>Enterobacteriaceae</taxon>
        <taxon>Escherichia</taxon>
    </lineage>
</organism>
<name>MENC_ECO7I</name>